<keyword id="KW-0378">Hydrolase</keyword>
<keyword id="KW-0460">Magnesium</keyword>
<sequence length="505" mass="59418">MIQIDFRKKINWHRRYRSPQGVKTEHEILRIFESDRGRIINSPAIRRLQQKTQVFPLERNAAVRTRLTHSLEVQQVGRYIAKEILSRLKEQDLLKTYGLDELTGPFESIVEMSCLMHDIGNPPFGHFGEAAINDWFRQRLFPADAESQPLSDDRCIVALLRLREGEETLNELRRKVRQDLCHFEGNAQGIRLVHTLMRMNLTWAQVGGILKYTRPAWWRGQPPATHHYLMKKPGYYLSEEPYIARLRKELNLALYSRFPLTWIMEAADDISYCVADLEDAVEKNIFSVEQLYHHLHEAWGEHEKGSLFAQVVENAWEKSHVNSLSRSTEDQFFMYLRVNTLNKLVPHAAQRFIDNLAEIFEGTFNHALLEDNSSYSRLLELYKNVAQKHVFSHPEVEQLELQGYRVISGLLEIYRPLLSLPLSDFAELVEKERLKRFPIESRLFQKLSTRHRLAYVEAVGKLSSDSPEYPILEYYYRCRLLQDYISGMTDLYAWDEYRRLMAVEQ</sequence>
<evidence type="ECO:0000255" key="1">
    <source>
        <dbReference type="HAMAP-Rule" id="MF_00030"/>
    </source>
</evidence>
<evidence type="ECO:0000255" key="2">
    <source>
        <dbReference type="PROSITE-ProRule" id="PRU01175"/>
    </source>
</evidence>
<name>DGTP_ESCF3</name>
<organism>
    <name type="scientific">Escherichia fergusonii (strain ATCC 35469 / DSM 13698 / CCUG 18766 / IAM 14443 / JCM 21226 / LMG 7866 / NBRC 102419 / NCTC 12128 / CDC 0568-73)</name>
    <dbReference type="NCBI Taxonomy" id="585054"/>
    <lineage>
        <taxon>Bacteria</taxon>
        <taxon>Pseudomonadati</taxon>
        <taxon>Pseudomonadota</taxon>
        <taxon>Gammaproteobacteria</taxon>
        <taxon>Enterobacterales</taxon>
        <taxon>Enterobacteriaceae</taxon>
        <taxon>Escherichia</taxon>
    </lineage>
</organism>
<accession>B7LWC1</accession>
<protein>
    <recommendedName>
        <fullName evidence="1">Deoxyguanosinetriphosphate triphosphohydrolase</fullName>
        <shortName evidence="1">dGTP triphosphohydrolase</shortName>
        <shortName evidence="1">dGTPase</shortName>
        <ecNumber evidence="1">3.1.5.1</ecNumber>
    </recommendedName>
</protein>
<feature type="chain" id="PRO_0000367320" description="Deoxyguanosinetriphosphate triphosphohydrolase">
    <location>
        <begin position="1"/>
        <end position="505"/>
    </location>
</feature>
<feature type="domain" description="HD" evidence="2">
    <location>
        <begin position="66"/>
        <end position="273"/>
    </location>
</feature>
<dbReference type="EC" id="3.1.5.1" evidence="1"/>
<dbReference type="EMBL" id="CU928158">
    <property type="protein sequence ID" value="CAQ87764.1"/>
    <property type="molecule type" value="Genomic_DNA"/>
</dbReference>
<dbReference type="RefSeq" id="WP_000614290.1">
    <property type="nucleotide sequence ID" value="NC_011740.1"/>
</dbReference>
<dbReference type="SMR" id="B7LWC1"/>
<dbReference type="GeneID" id="75058732"/>
<dbReference type="KEGG" id="efe:EFER_0183"/>
<dbReference type="HOGENOM" id="CLU_028163_2_1_6"/>
<dbReference type="OrthoDB" id="9803619at2"/>
<dbReference type="Proteomes" id="UP000000745">
    <property type="component" value="Chromosome"/>
</dbReference>
<dbReference type="GO" id="GO:0008832">
    <property type="term" value="F:dGTPase activity"/>
    <property type="evidence" value="ECO:0007669"/>
    <property type="project" value="UniProtKB-UniRule"/>
</dbReference>
<dbReference type="GO" id="GO:0000287">
    <property type="term" value="F:magnesium ion binding"/>
    <property type="evidence" value="ECO:0007669"/>
    <property type="project" value="UniProtKB-UniRule"/>
</dbReference>
<dbReference type="GO" id="GO:0006203">
    <property type="term" value="P:dGTP catabolic process"/>
    <property type="evidence" value="ECO:0007669"/>
    <property type="project" value="InterPro"/>
</dbReference>
<dbReference type="CDD" id="cd00077">
    <property type="entry name" value="HDc"/>
    <property type="match status" value="1"/>
</dbReference>
<dbReference type="FunFam" id="1.10.3210.10:FF:000009">
    <property type="entry name" value="Deoxyguanosinetriphosphate triphosphohydrolase"/>
    <property type="match status" value="1"/>
</dbReference>
<dbReference type="FunFam" id="1.10.3210.10:FF:000010">
    <property type="entry name" value="Deoxyguanosinetriphosphate triphosphohydrolase"/>
    <property type="match status" value="1"/>
</dbReference>
<dbReference type="FunFam" id="1.10.3410.10:FF:000001">
    <property type="entry name" value="Deoxyguanosinetriphosphate triphosphohydrolase"/>
    <property type="match status" value="1"/>
</dbReference>
<dbReference type="Gene3D" id="1.10.3210.10">
    <property type="entry name" value="Hypothetical protein af1432"/>
    <property type="match status" value="2"/>
</dbReference>
<dbReference type="Gene3D" id="1.10.3410.10">
    <property type="entry name" value="putative deoxyguanosinetriphosphate triphosphohydrolase like domain"/>
    <property type="match status" value="1"/>
</dbReference>
<dbReference type="HAMAP" id="MF_00030">
    <property type="entry name" value="dGTPase_type1"/>
    <property type="match status" value="1"/>
</dbReference>
<dbReference type="InterPro" id="IPR023293">
    <property type="entry name" value="dGTP_triP_hydro_central_sf"/>
</dbReference>
<dbReference type="InterPro" id="IPR006261">
    <property type="entry name" value="dGTPase"/>
</dbReference>
<dbReference type="InterPro" id="IPR050135">
    <property type="entry name" value="dGTPase-like"/>
</dbReference>
<dbReference type="InterPro" id="IPR020779">
    <property type="entry name" value="dNTPase_1"/>
</dbReference>
<dbReference type="InterPro" id="IPR003607">
    <property type="entry name" value="HD/PDEase_dom"/>
</dbReference>
<dbReference type="InterPro" id="IPR006674">
    <property type="entry name" value="HD_domain"/>
</dbReference>
<dbReference type="NCBIfam" id="TIGR01353">
    <property type="entry name" value="dGTP_triPase"/>
    <property type="match status" value="1"/>
</dbReference>
<dbReference type="NCBIfam" id="NF003429">
    <property type="entry name" value="PRK04926.1"/>
    <property type="match status" value="1"/>
</dbReference>
<dbReference type="PANTHER" id="PTHR11373:SF32">
    <property type="entry name" value="DEOXYGUANOSINETRIPHOSPHATE TRIPHOSPHOHYDROLASE"/>
    <property type="match status" value="1"/>
</dbReference>
<dbReference type="PANTHER" id="PTHR11373">
    <property type="entry name" value="DEOXYNUCLEOSIDE TRIPHOSPHATE TRIPHOSPHOHYDROLASE"/>
    <property type="match status" value="1"/>
</dbReference>
<dbReference type="Pfam" id="PF01966">
    <property type="entry name" value="HD"/>
    <property type="match status" value="1"/>
</dbReference>
<dbReference type="SMART" id="SM00471">
    <property type="entry name" value="HDc"/>
    <property type="match status" value="1"/>
</dbReference>
<dbReference type="SUPFAM" id="SSF109604">
    <property type="entry name" value="HD-domain/PDEase-like"/>
    <property type="match status" value="1"/>
</dbReference>
<dbReference type="PROSITE" id="PS51831">
    <property type="entry name" value="HD"/>
    <property type="match status" value="1"/>
</dbReference>
<proteinExistence type="inferred from homology"/>
<comment type="function">
    <text evidence="1">dGTPase preferentially hydrolyzes dGTP over the other canonical NTPs.</text>
</comment>
<comment type="catalytic activity">
    <reaction evidence="1">
        <text>dGTP + H2O = 2'-deoxyguanosine + triphosphate + H(+)</text>
        <dbReference type="Rhea" id="RHEA:15193"/>
        <dbReference type="ChEBI" id="CHEBI:15377"/>
        <dbReference type="ChEBI" id="CHEBI:15378"/>
        <dbReference type="ChEBI" id="CHEBI:17172"/>
        <dbReference type="ChEBI" id="CHEBI:18036"/>
        <dbReference type="ChEBI" id="CHEBI:61429"/>
        <dbReference type="EC" id="3.1.5.1"/>
    </reaction>
</comment>
<comment type="cofactor">
    <cofactor evidence="1">
        <name>Mg(2+)</name>
        <dbReference type="ChEBI" id="CHEBI:18420"/>
    </cofactor>
</comment>
<comment type="subunit">
    <text evidence="1">Homotetramer.</text>
</comment>
<comment type="similarity">
    <text evidence="1">Belongs to the dGTPase family. Type 1 subfamily.</text>
</comment>
<gene>
    <name evidence="1" type="primary">dgt</name>
    <name type="ordered locus">EFER_0183</name>
</gene>
<reference key="1">
    <citation type="journal article" date="2009" name="PLoS Genet.">
        <title>Organised genome dynamics in the Escherichia coli species results in highly diverse adaptive paths.</title>
        <authorList>
            <person name="Touchon M."/>
            <person name="Hoede C."/>
            <person name="Tenaillon O."/>
            <person name="Barbe V."/>
            <person name="Baeriswyl S."/>
            <person name="Bidet P."/>
            <person name="Bingen E."/>
            <person name="Bonacorsi S."/>
            <person name="Bouchier C."/>
            <person name="Bouvet O."/>
            <person name="Calteau A."/>
            <person name="Chiapello H."/>
            <person name="Clermont O."/>
            <person name="Cruveiller S."/>
            <person name="Danchin A."/>
            <person name="Diard M."/>
            <person name="Dossat C."/>
            <person name="Karoui M.E."/>
            <person name="Frapy E."/>
            <person name="Garry L."/>
            <person name="Ghigo J.M."/>
            <person name="Gilles A.M."/>
            <person name="Johnson J."/>
            <person name="Le Bouguenec C."/>
            <person name="Lescat M."/>
            <person name="Mangenot S."/>
            <person name="Martinez-Jehanne V."/>
            <person name="Matic I."/>
            <person name="Nassif X."/>
            <person name="Oztas S."/>
            <person name="Petit M.A."/>
            <person name="Pichon C."/>
            <person name="Rouy Z."/>
            <person name="Ruf C.S."/>
            <person name="Schneider D."/>
            <person name="Tourret J."/>
            <person name="Vacherie B."/>
            <person name="Vallenet D."/>
            <person name="Medigue C."/>
            <person name="Rocha E.P.C."/>
            <person name="Denamur E."/>
        </authorList>
    </citation>
    <scope>NUCLEOTIDE SEQUENCE [LARGE SCALE GENOMIC DNA]</scope>
    <source>
        <strain>ATCC 35469 / DSM 13698 / BCRC 15582 / CCUG 18766 / IAM 14443 / JCM 21226 / LMG 7866 / NBRC 102419 / NCTC 12128 / CDC 0568-73</strain>
    </source>
</reference>